<feature type="chain" id="PRO_0000319685" description="Phosphoribosyl-AMP cyclohydrolase">
    <location>
        <begin position="1"/>
        <end position="146"/>
    </location>
</feature>
<feature type="binding site" evidence="1">
    <location>
        <position position="95"/>
    </location>
    <ligand>
        <name>Mg(2+)</name>
        <dbReference type="ChEBI" id="CHEBI:18420"/>
    </ligand>
</feature>
<feature type="binding site" evidence="1">
    <location>
        <position position="96"/>
    </location>
    <ligand>
        <name>Zn(2+)</name>
        <dbReference type="ChEBI" id="CHEBI:29105"/>
        <note>ligand shared between dimeric partners</note>
    </ligand>
</feature>
<feature type="binding site" evidence="1">
    <location>
        <position position="97"/>
    </location>
    <ligand>
        <name>Mg(2+)</name>
        <dbReference type="ChEBI" id="CHEBI:18420"/>
    </ligand>
</feature>
<feature type="binding site" evidence="1">
    <location>
        <position position="99"/>
    </location>
    <ligand>
        <name>Mg(2+)</name>
        <dbReference type="ChEBI" id="CHEBI:18420"/>
    </ligand>
</feature>
<feature type="binding site" evidence="1">
    <location>
        <position position="112"/>
    </location>
    <ligand>
        <name>Zn(2+)</name>
        <dbReference type="ChEBI" id="CHEBI:29105"/>
        <note>ligand shared between dimeric partners</note>
    </ligand>
</feature>
<feature type="binding site" evidence="1">
    <location>
        <position position="119"/>
    </location>
    <ligand>
        <name>Zn(2+)</name>
        <dbReference type="ChEBI" id="CHEBI:29105"/>
        <note>ligand shared between dimeric partners</note>
    </ligand>
</feature>
<reference key="1">
    <citation type="journal article" date="2011" name="Stand. Genomic Sci.">
        <title>Complete genome sequence of the halophilic and highly halotolerant Chromohalobacter salexigens type strain (1H11(T)).</title>
        <authorList>
            <person name="Copeland A."/>
            <person name="O'Connor K."/>
            <person name="Lucas S."/>
            <person name="Lapidus A."/>
            <person name="Berry K.W."/>
            <person name="Detter J.C."/>
            <person name="Del Rio T.G."/>
            <person name="Hammon N."/>
            <person name="Dalin E."/>
            <person name="Tice H."/>
            <person name="Pitluck S."/>
            <person name="Bruce D."/>
            <person name="Goodwin L."/>
            <person name="Han C."/>
            <person name="Tapia R."/>
            <person name="Saunders E."/>
            <person name="Schmutz J."/>
            <person name="Brettin T."/>
            <person name="Larimer F."/>
            <person name="Land M."/>
            <person name="Hauser L."/>
            <person name="Vargas C."/>
            <person name="Nieto J.J."/>
            <person name="Kyrpides N.C."/>
            <person name="Ivanova N."/>
            <person name="Goker M."/>
            <person name="Klenk H.P."/>
            <person name="Csonka L.N."/>
            <person name="Woyke T."/>
        </authorList>
    </citation>
    <scope>NUCLEOTIDE SEQUENCE [LARGE SCALE GENOMIC DNA]</scope>
    <source>
        <strain>ATCC BAA-138 / DSM 3043 / CIP 106854 / NCIMB 13768 / 1H11</strain>
    </source>
</reference>
<gene>
    <name evidence="1" type="primary">hisI</name>
    <name type="ordered locus">Csal_1883</name>
</gene>
<comment type="function">
    <text evidence="1">Catalyzes the hydrolysis of the adenine ring of phosphoribosyl-AMP.</text>
</comment>
<comment type="catalytic activity">
    <reaction evidence="1">
        <text>1-(5-phospho-beta-D-ribosyl)-5'-AMP + H2O = 1-(5-phospho-beta-D-ribosyl)-5-[(5-phospho-beta-D-ribosylamino)methylideneamino]imidazole-4-carboxamide</text>
        <dbReference type="Rhea" id="RHEA:20049"/>
        <dbReference type="ChEBI" id="CHEBI:15377"/>
        <dbReference type="ChEBI" id="CHEBI:58435"/>
        <dbReference type="ChEBI" id="CHEBI:59457"/>
        <dbReference type="EC" id="3.5.4.19"/>
    </reaction>
</comment>
<comment type="cofactor">
    <cofactor evidence="1">
        <name>Mg(2+)</name>
        <dbReference type="ChEBI" id="CHEBI:18420"/>
    </cofactor>
    <text evidence="1">Binds 1 Mg(2+) ion per subunit.</text>
</comment>
<comment type="cofactor">
    <cofactor evidence="1">
        <name>Zn(2+)</name>
        <dbReference type="ChEBI" id="CHEBI:29105"/>
    </cofactor>
    <text evidence="1">Binds 1 zinc ion per subunit.</text>
</comment>
<comment type="pathway">
    <text evidence="1">Amino-acid biosynthesis; L-histidine biosynthesis; L-histidine from 5-phospho-alpha-D-ribose 1-diphosphate: step 3/9.</text>
</comment>
<comment type="subunit">
    <text evidence="1">Homodimer.</text>
</comment>
<comment type="subcellular location">
    <subcellularLocation>
        <location evidence="1">Cytoplasm</location>
    </subcellularLocation>
</comment>
<comment type="similarity">
    <text evidence="1">Belongs to the PRA-CH family.</text>
</comment>
<proteinExistence type="inferred from homology"/>
<evidence type="ECO:0000255" key="1">
    <source>
        <dbReference type="HAMAP-Rule" id="MF_01021"/>
    </source>
</evidence>
<protein>
    <recommendedName>
        <fullName evidence="1">Phosphoribosyl-AMP cyclohydrolase</fullName>
        <shortName evidence="1">PRA-CH</shortName>
        <ecNumber evidence="1">3.5.4.19</ecNumber>
    </recommendedName>
</protein>
<organism>
    <name type="scientific">Chromohalobacter salexigens (strain ATCC BAA-138 / DSM 3043 / CIP 106854 / NCIMB 13768 / 1H11)</name>
    <dbReference type="NCBI Taxonomy" id="290398"/>
    <lineage>
        <taxon>Bacteria</taxon>
        <taxon>Pseudomonadati</taxon>
        <taxon>Pseudomonadota</taxon>
        <taxon>Gammaproteobacteria</taxon>
        <taxon>Oceanospirillales</taxon>
        <taxon>Halomonadaceae</taxon>
        <taxon>Chromohalobacter</taxon>
    </lineage>
</organism>
<sequence length="146" mass="16081">MTQRFKQLETAAQGTREATRDLLDAARWNDAGLIPAIAQQHDSGEVLMMAWMNRAALEETLATGRVCYWSRSRGKPWRKGESSGQVQQLVTAHLDCDGDTLLLGVDQQGPACHTGRRSCFYVALGADTAHVDSAPLVDPHELYGER</sequence>
<keyword id="KW-0028">Amino-acid biosynthesis</keyword>
<keyword id="KW-0963">Cytoplasm</keyword>
<keyword id="KW-0368">Histidine biosynthesis</keyword>
<keyword id="KW-0378">Hydrolase</keyword>
<keyword id="KW-0460">Magnesium</keyword>
<keyword id="KW-0479">Metal-binding</keyword>
<keyword id="KW-1185">Reference proteome</keyword>
<keyword id="KW-0862">Zinc</keyword>
<accession>Q1QWC3</accession>
<name>HIS3_CHRSD</name>
<dbReference type="EC" id="3.5.4.19" evidence="1"/>
<dbReference type="EMBL" id="CP000285">
    <property type="protein sequence ID" value="ABE59235.1"/>
    <property type="molecule type" value="Genomic_DNA"/>
</dbReference>
<dbReference type="RefSeq" id="WP_011507181.1">
    <property type="nucleotide sequence ID" value="NC_007963.1"/>
</dbReference>
<dbReference type="SMR" id="Q1QWC3"/>
<dbReference type="STRING" id="290398.Csal_1883"/>
<dbReference type="GeneID" id="95334599"/>
<dbReference type="KEGG" id="csa:Csal_1883"/>
<dbReference type="eggNOG" id="COG0139">
    <property type="taxonomic scope" value="Bacteria"/>
</dbReference>
<dbReference type="HOGENOM" id="CLU_048577_5_2_6"/>
<dbReference type="OrthoDB" id="9795769at2"/>
<dbReference type="UniPathway" id="UPA00031">
    <property type="reaction ID" value="UER00008"/>
</dbReference>
<dbReference type="Proteomes" id="UP000000239">
    <property type="component" value="Chromosome"/>
</dbReference>
<dbReference type="GO" id="GO:0005737">
    <property type="term" value="C:cytoplasm"/>
    <property type="evidence" value="ECO:0007669"/>
    <property type="project" value="UniProtKB-SubCell"/>
</dbReference>
<dbReference type="GO" id="GO:0000287">
    <property type="term" value="F:magnesium ion binding"/>
    <property type="evidence" value="ECO:0007669"/>
    <property type="project" value="UniProtKB-UniRule"/>
</dbReference>
<dbReference type="GO" id="GO:0004635">
    <property type="term" value="F:phosphoribosyl-AMP cyclohydrolase activity"/>
    <property type="evidence" value="ECO:0007669"/>
    <property type="project" value="UniProtKB-UniRule"/>
</dbReference>
<dbReference type="GO" id="GO:0008270">
    <property type="term" value="F:zinc ion binding"/>
    <property type="evidence" value="ECO:0007669"/>
    <property type="project" value="UniProtKB-UniRule"/>
</dbReference>
<dbReference type="GO" id="GO:0000105">
    <property type="term" value="P:L-histidine biosynthetic process"/>
    <property type="evidence" value="ECO:0007669"/>
    <property type="project" value="UniProtKB-UniRule"/>
</dbReference>
<dbReference type="FunFam" id="3.10.20.810:FF:000001">
    <property type="entry name" value="Histidine biosynthesis bifunctional protein HisIE"/>
    <property type="match status" value="1"/>
</dbReference>
<dbReference type="Gene3D" id="3.10.20.810">
    <property type="entry name" value="Phosphoribosyl-AMP cyclohydrolase"/>
    <property type="match status" value="1"/>
</dbReference>
<dbReference type="HAMAP" id="MF_01021">
    <property type="entry name" value="HisI"/>
    <property type="match status" value="1"/>
</dbReference>
<dbReference type="InterPro" id="IPR026660">
    <property type="entry name" value="PRA-CH"/>
</dbReference>
<dbReference type="InterPro" id="IPR002496">
    <property type="entry name" value="PRib_AMP_CycHydrolase_dom"/>
</dbReference>
<dbReference type="InterPro" id="IPR038019">
    <property type="entry name" value="PRib_AMP_CycHydrolase_sf"/>
</dbReference>
<dbReference type="NCBIfam" id="NF000768">
    <property type="entry name" value="PRK00051.1"/>
    <property type="match status" value="1"/>
</dbReference>
<dbReference type="PANTHER" id="PTHR42945">
    <property type="entry name" value="HISTIDINE BIOSYNTHESIS BIFUNCTIONAL PROTEIN"/>
    <property type="match status" value="1"/>
</dbReference>
<dbReference type="PANTHER" id="PTHR42945:SF1">
    <property type="entry name" value="HISTIDINE BIOSYNTHESIS BIFUNCTIONAL PROTEIN HIS7"/>
    <property type="match status" value="1"/>
</dbReference>
<dbReference type="Pfam" id="PF01502">
    <property type="entry name" value="PRA-CH"/>
    <property type="match status" value="1"/>
</dbReference>
<dbReference type="SUPFAM" id="SSF141734">
    <property type="entry name" value="HisI-like"/>
    <property type="match status" value="1"/>
</dbReference>